<sequence length="287" mass="31997">MNLLTKERGLAYVQLARIDKPIGTLLLLWPTLWALWLAADGLPDLWTLLVFVVGVFLMRSAGCVINDYADRNFDGHVKRTAGRPLPMGKVKPREVLALFAVLALISFALVLTMNPLTIGLSFAALLLAVCYPFMKRYIPIPQLVLGMAFSWSIPMAYAAQANALPAVAWLVFLANLLWTIAYDTQYAMVDRDDDLKLGLKSSAILFGRHDKRIIGALQLLTLLILLLVGQLSELGSSYYWSLLAAAALFVYQQRLIRERQREACFQAFLNNNYVGALIFAGVVINYL</sequence>
<evidence type="ECO:0000255" key="1">
    <source>
        <dbReference type="HAMAP-Rule" id="MF_01635"/>
    </source>
</evidence>
<feature type="chain" id="PRO_1000088170" description="4-hydroxybenzoate octaprenyltransferase">
    <location>
        <begin position="1"/>
        <end position="287"/>
    </location>
</feature>
<feature type="transmembrane region" description="Helical" evidence="1">
    <location>
        <begin position="21"/>
        <end position="39"/>
    </location>
</feature>
<feature type="transmembrane region" description="Helical" evidence="1">
    <location>
        <begin position="95"/>
        <end position="115"/>
    </location>
</feature>
<feature type="transmembrane region" description="Helical" evidence="1">
    <location>
        <begin position="116"/>
        <end position="136"/>
    </location>
</feature>
<feature type="transmembrane region" description="Helical" evidence="1">
    <location>
        <begin position="138"/>
        <end position="158"/>
    </location>
</feature>
<feature type="transmembrane region" description="Helical" evidence="1">
    <location>
        <begin position="161"/>
        <end position="181"/>
    </location>
</feature>
<feature type="transmembrane region" description="Helical" evidence="1">
    <location>
        <begin position="213"/>
        <end position="233"/>
    </location>
</feature>
<feature type="transmembrane region" description="Helical" evidence="1">
    <location>
        <begin position="234"/>
        <end position="251"/>
    </location>
</feature>
<feature type="transmembrane region" description="Helical" evidence="1">
    <location>
        <begin position="264"/>
        <end position="284"/>
    </location>
</feature>
<comment type="function">
    <text evidence="1">Catalyzes the prenylation of para-hydroxybenzoate (PHB) with an all-trans polyprenyl group. Mediates the second step in the final reaction sequence of ubiquinone-8 (UQ-8) biosynthesis, which is the condensation of the polyisoprenoid side chain with PHB, generating the first membrane-bound Q intermediate 3-octaprenyl-4-hydroxybenzoate.</text>
</comment>
<comment type="catalytic activity">
    <reaction evidence="1">
        <text>all-trans-octaprenyl diphosphate + 4-hydroxybenzoate = 4-hydroxy-3-(all-trans-octaprenyl)benzoate + diphosphate</text>
        <dbReference type="Rhea" id="RHEA:27782"/>
        <dbReference type="ChEBI" id="CHEBI:1617"/>
        <dbReference type="ChEBI" id="CHEBI:17879"/>
        <dbReference type="ChEBI" id="CHEBI:33019"/>
        <dbReference type="ChEBI" id="CHEBI:57711"/>
        <dbReference type="EC" id="2.5.1.39"/>
    </reaction>
</comment>
<comment type="cofactor">
    <cofactor evidence="1">
        <name>Mg(2+)</name>
        <dbReference type="ChEBI" id="CHEBI:18420"/>
    </cofactor>
</comment>
<comment type="pathway">
    <text evidence="1">Cofactor biosynthesis; ubiquinone biosynthesis.</text>
</comment>
<comment type="subcellular location">
    <subcellularLocation>
        <location evidence="1">Cell inner membrane</location>
        <topology evidence="1">Multi-pass membrane protein</topology>
    </subcellularLocation>
</comment>
<comment type="similarity">
    <text evidence="1">Belongs to the UbiA prenyltransferase family.</text>
</comment>
<organism>
    <name type="scientific">Aeromonas hydrophila subsp. hydrophila (strain ATCC 7966 / DSM 30187 / BCRC 13018 / CCUG 14551 / JCM 1027 / KCTC 2358 / NCIMB 9240 / NCTC 8049)</name>
    <dbReference type="NCBI Taxonomy" id="380703"/>
    <lineage>
        <taxon>Bacteria</taxon>
        <taxon>Pseudomonadati</taxon>
        <taxon>Pseudomonadota</taxon>
        <taxon>Gammaproteobacteria</taxon>
        <taxon>Aeromonadales</taxon>
        <taxon>Aeromonadaceae</taxon>
        <taxon>Aeromonas</taxon>
    </lineage>
</organism>
<keyword id="KW-0997">Cell inner membrane</keyword>
<keyword id="KW-1003">Cell membrane</keyword>
<keyword id="KW-0460">Magnesium</keyword>
<keyword id="KW-0472">Membrane</keyword>
<keyword id="KW-1185">Reference proteome</keyword>
<keyword id="KW-0808">Transferase</keyword>
<keyword id="KW-0812">Transmembrane</keyword>
<keyword id="KW-1133">Transmembrane helix</keyword>
<keyword id="KW-0831">Ubiquinone biosynthesis</keyword>
<gene>
    <name evidence="1" type="primary">ubiA</name>
    <name type="ordered locus">AHA_0181</name>
</gene>
<reference key="1">
    <citation type="journal article" date="2006" name="J. Bacteriol.">
        <title>Genome sequence of Aeromonas hydrophila ATCC 7966T: jack of all trades.</title>
        <authorList>
            <person name="Seshadri R."/>
            <person name="Joseph S.W."/>
            <person name="Chopra A.K."/>
            <person name="Sha J."/>
            <person name="Shaw J."/>
            <person name="Graf J."/>
            <person name="Haft D.H."/>
            <person name="Wu M."/>
            <person name="Ren Q."/>
            <person name="Rosovitz M.J."/>
            <person name="Madupu R."/>
            <person name="Tallon L."/>
            <person name="Kim M."/>
            <person name="Jin S."/>
            <person name="Vuong H."/>
            <person name="Stine O.C."/>
            <person name="Ali A."/>
            <person name="Horneman A.J."/>
            <person name="Heidelberg J.F."/>
        </authorList>
    </citation>
    <scope>NUCLEOTIDE SEQUENCE [LARGE SCALE GENOMIC DNA]</scope>
    <source>
        <strain>ATCC 7966 / DSM 30187 / BCRC 13018 / CCUG 14551 / JCM 1027 / KCTC 2358 / NCIMB 9240 / NCTC 8049</strain>
    </source>
</reference>
<name>UBIA_AERHH</name>
<protein>
    <recommendedName>
        <fullName evidence="1">4-hydroxybenzoate octaprenyltransferase</fullName>
        <ecNumber evidence="1">2.5.1.39</ecNumber>
    </recommendedName>
    <alternativeName>
        <fullName evidence="1">4-HB polyprenyltransferase</fullName>
    </alternativeName>
</protein>
<dbReference type="EC" id="2.5.1.39" evidence="1"/>
<dbReference type="EMBL" id="CP000462">
    <property type="protein sequence ID" value="ABK37205.1"/>
    <property type="molecule type" value="Genomic_DNA"/>
</dbReference>
<dbReference type="RefSeq" id="WP_011704199.1">
    <property type="nucleotide sequence ID" value="NC_008570.1"/>
</dbReference>
<dbReference type="RefSeq" id="YP_854714.1">
    <property type="nucleotide sequence ID" value="NC_008570.1"/>
</dbReference>
<dbReference type="SMR" id="A0KEP9"/>
<dbReference type="STRING" id="380703.AHA_0181"/>
<dbReference type="EnsemblBacteria" id="ABK37205">
    <property type="protein sequence ID" value="ABK37205"/>
    <property type="gene ID" value="AHA_0181"/>
</dbReference>
<dbReference type="GeneID" id="4486811"/>
<dbReference type="KEGG" id="aha:AHA_0181"/>
<dbReference type="PATRIC" id="fig|380703.7.peg.172"/>
<dbReference type="eggNOG" id="COG0382">
    <property type="taxonomic scope" value="Bacteria"/>
</dbReference>
<dbReference type="HOGENOM" id="CLU_034879_1_0_6"/>
<dbReference type="OrthoDB" id="9782418at2"/>
<dbReference type="UniPathway" id="UPA00232"/>
<dbReference type="Proteomes" id="UP000000756">
    <property type="component" value="Chromosome"/>
</dbReference>
<dbReference type="GO" id="GO:0005886">
    <property type="term" value="C:plasma membrane"/>
    <property type="evidence" value="ECO:0007669"/>
    <property type="project" value="UniProtKB-SubCell"/>
</dbReference>
<dbReference type="GO" id="GO:0008412">
    <property type="term" value="F:4-hydroxybenzoate polyprenyltransferase activity"/>
    <property type="evidence" value="ECO:0007669"/>
    <property type="project" value="UniProtKB-UniRule"/>
</dbReference>
<dbReference type="GO" id="GO:0006744">
    <property type="term" value="P:ubiquinone biosynthetic process"/>
    <property type="evidence" value="ECO:0007669"/>
    <property type="project" value="UniProtKB-UniRule"/>
</dbReference>
<dbReference type="CDD" id="cd13959">
    <property type="entry name" value="PT_UbiA_COQ2"/>
    <property type="match status" value="1"/>
</dbReference>
<dbReference type="FunFam" id="1.10.357.140:FF:000002">
    <property type="entry name" value="4-hydroxybenzoate octaprenyltransferase"/>
    <property type="match status" value="1"/>
</dbReference>
<dbReference type="FunFam" id="1.20.120.1780:FF:000001">
    <property type="entry name" value="4-hydroxybenzoate octaprenyltransferase"/>
    <property type="match status" value="1"/>
</dbReference>
<dbReference type="Gene3D" id="1.10.357.140">
    <property type="entry name" value="UbiA prenyltransferase"/>
    <property type="match status" value="1"/>
</dbReference>
<dbReference type="Gene3D" id="1.20.120.1780">
    <property type="entry name" value="UbiA prenyltransferase"/>
    <property type="match status" value="1"/>
</dbReference>
<dbReference type="HAMAP" id="MF_01635">
    <property type="entry name" value="UbiA"/>
    <property type="match status" value="1"/>
</dbReference>
<dbReference type="InterPro" id="IPR006370">
    <property type="entry name" value="HB_polyprenyltransferase-like"/>
</dbReference>
<dbReference type="InterPro" id="IPR039653">
    <property type="entry name" value="Prenyltransferase"/>
</dbReference>
<dbReference type="InterPro" id="IPR000537">
    <property type="entry name" value="UbiA_prenyltransferase"/>
</dbReference>
<dbReference type="InterPro" id="IPR030470">
    <property type="entry name" value="UbiA_prenylTrfase_CS"/>
</dbReference>
<dbReference type="InterPro" id="IPR044878">
    <property type="entry name" value="UbiA_sf"/>
</dbReference>
<dbReference type="NCBIfam" id="TIGR01474">
    <property type="entry name" value="ubiA_proteo"/>
    <property type="match status" value="1"/>
</dbReference>
<dbReference type="PANTHER" id="PTHR11048:SF28">
    <property type="entry name" value="4-HYDROXYBENZOATE POLYPRENYLTRANSFERASE, MITOCHONDRIAL"/>
    <property type="match status" value="1"/>
</dbReference>
<dbReference type="PANTHER" id="PTHR11048">
    <property type="entry name" value="PRENYLTRANSFERASES"/>
    <property type="match status" value="1"/>
</dbReference>
<dbReference type="Pfam" id="PF01040">
    <property type="entry name" value="UbiA"/>
    <property type="match status" value="1"/>
</dbReference>
<dbReference type="PROSITE" id="PS00943">
    <property type="entry name" value="UBIA"/>
    <property type="match status" value="1"/>
</dbReference>
<proteinExistence type="inferred from homology"/>
<accession>A0KEP9</accession>